<reference key="1">
    <citation type="journal article" date="2003" name="Proc. Natl. Acad. Sci. U.S.A.">
        <title>Reductive genome evolution in Buchnera aphidicola.</title>
        <authorList>
            <person name="van Ham R.C.H.J."/>
            <person name="Kamerbeek J."/>
            <person name="Palacios C."/>
            <person name="Rausell C."/>
            <person name="Abascal F."/>
            <person name="Bastolla U."/>
            <person name="Fernandez J.M."/>
            <person name="Jimenez L."/>
            <person name="Postigo M."/>
            <person name="Silva F.J."/>
            <person name="Tamames J."/>
            <person name="Viguera E."/>
            <person name="Latorre A."/>
            <person name="Valencia A."/>
            <person name="Moran F."/>
            <person name="Moya A."/>
        </authorList>
    </citation>
    <scope>NUCLEOTIDE SEQUENCE [LARGE SCALE GENOMIC DNA]</scope>
    <source>
        <strain>Bp</strain>
    </source>
</reference>
<evidence type="ECO:0000255" key="1">
    <source>
        <dbReference type="HAMAP-Rule" id="MF_00175"/>
    </source>
</evidence>
<evidence type="ECO:0000255" key="2">
    <source>
        <dbReference type="PROSITE-ProRule" id="PRU01250"/>
    </source>
</evidence>
<protein>
    <recommendedName>
        <fullName evidence="1">ATP-dependent Clp protease ATP-binding subunit ClpX</fullName>
    </recommendedName>
</protein>
<accession>Q89AA0</accession>
<feature type="chain" id="PRO_0000160330" description="ATP-dependent Clp protease ATP-binding subunit ClpX">
    <location>
        <begin position="1"/>
        <end position="428"/>
    </location>
</feature>
<feature type="domain" description="ClpX-type ZB" evidence="2">
    <location>
        <begin position="1"/>
        <end position="56"/>
    </location>
</feature>
<feature type="binding site" evidence="2">
    <location>
        <position position="15"/>
    </location>
    <ligand>
        <name>Zn(2+)</name>
        <dbReference type="ChEBI" id="CHEBI:29105"/>
    </ligand>
</feature>
<feature type="binding site" evidence="2">
    <location>
        <position position="18"/>
    </location>
    <ligand>
        <name>Zn(2+)</name>
        <dbReference type="ChEBI" id="CHEBI:29105"/>
    </ligand>
</feature>
<feature type="binding site" evidence="2">
    <location>
        <position position="37"/>
    </location>
    <ligand>
        <name>Zn(2+)</name>
        <dbReference type="ChEBI" id="CHEBI:29105"/>
    </ligand>
</feature>
<feature type="binding site" evidence="2">
    <location>
        <position position="40"/>
    </location>
    <ligand>
        <name>Zn(2+)</name>
        <dbReference type="ChEBI" id="CHEBI:29105"/>
    </ligand>
</feature>
<feature type="binding site" evidence="1">
    <location>
        <begin position="123"/>
        <end position="130"/>
    </location>
    <ligand>
        <name>ATP</name>
        <dbReference type="ChEBI" id="CHEBI:30616"/>
    </ligand>
</feature>
<comment type="function">
    <text evidence="1">ATP-dependent specificity component of the Clp protease. It directs the protease to specific substrates. Can perform chaperone functions in the absence of ClpP.</text>
</comment>
<comment type="subunit">
    <text evidence="1">Component of the ClpX-ClpP complex. Forms a hexameric ring that, in the presence of ATP, binds to fourteen ClpP subunits assembled into a disk-like structure with a central cavity, resembling the structure of eukaryotic proteasomes.</text>
</comment>
<comment type="similarity">
    <text evidence="1">Belongs to the ClpX chaperone family.</text>
</comment>
<sequence>MVDNSKNNTETLLCCSFCEKNQKEVKKLIAGLSAYICDECIKLCNNILEEENNNLSSYYDVKKKIPTPYEIFKHLDNYIIGQLHTKKVLSVAVYNHYKRLNHLNSKKNNNIELGKSNLLLIGPTGCGKTLLAETLAKFLDVPFSISDATTLTEAGYVGEDVENIIQRLLQKCNYNIKKAETGIIYIDEIDKISRKSENPSITRDVSGEGVQQALLKLIEGTLASVPMQGGRKHPQQEFLKVDTSKILFICGGAFLGLNKIIEKRTKLGTKIGFNAKVNKNLKICSKDALMQQVIPEDLIKFGLIPEFIGRLPILTILHELDKKMLVKILSEPKNALIKQYQTLFKLEDVELKICTKVIEYIAQKAMNQNTGARGLRSIIEMLLLDTMYRLPSMTNIKTIIIDESTIVNNNLTPILIYKKHDSKTTSGK</sequence>
<name>CLPX_BUCBP</name>
<keyword id="KW-0067">ATP-binding</keyword>
<keyword id="KW-0143">Chaperone</keyword>
<keyword id="KW-0479">Metal-binding</keyword>
<keyword id="KW-0547">Nucleotide-binding</keyword>
<keyword id="KW-1185">Reference proteome</keyword>
<keyword id="KW-0862">Zinc</keyword>
<organism>
    <name type="scientific">Buchnera aphidicola subsp. Baizongia pistaciae (strain Bp)</name>
    <dbReference type="NCBI Taxonomy" id="224915"/>
    <lineage>
        <taxon>Bacteria</taxon>
        <taxon>Pseudomonadati</taxon>
        <taxon>Pseudomonadota</taxon>
        <taxon>Gammaproteobacteria</taxon>
        <taxon>Enterobacterales</taxon>
        <taxon>Erwiniaceae</taxon>
        <taxon>Buchnera</taxon>
    </lineage>
</organism>
<proteinExistence type="inferred from homology"/>
<gene>
    <name evidence="1" type="primary">clpX</name>
    <name type="ordered locus">bbp_420</name>
</gene>
<dbReference type="EMBL" id="AE016826">
    <property type="protein sequence ID" value="AAO27130.1"/>
    <property type="molecule type" value="Genomic_DNA"/>
</dbReference>
<dbReference type="RefSeq" id="WP_011091531.1">
    <property type="nucleotide sequence ID" value="NC_004545.1"/>
</dbReference>
<dbReference type="SMR" id="Q89AA0"/>
<dbReference type="STRING" id="224915.bbp_420"/>
<dbReference type="KEGG" id="bab:bbp_420"/>
<dbReference type="eggNOG" id="COG1219">
    <property type="taxonomic scope" value="Bacteria"/>
</dbReference>
<dbReference type="HOGENOM" id="CLU_014218_8_2_6"/>
<dbReference type="OrthoDB" id="9804062at2"/>
<dbReference type="Proteomes" id="UP000000601">
    <property type="component" value="Chromosome"/>
</dbReference>
<dbReference type="GO" id="GO:0009376">
    <property type="term" value="C:HslUV protease complex"/>
    <property type="evidence" value="ECO:0007669"/>
    <property type="project" value="TreeGrafter"/>
</dbReference>
<dbReference type="GO" id="GO:0005524">
    <property type="term" value="F:ATP binding"/>
    <property type="evidence" value="ECO:0007669"/>
    <property type="project" value="UniProtKB-UniRule"/>
</dbReference>
<dbReference type="GO" id="GO:0016887">
    <property type="term" value="F:ATP hydrolysis activity"/>
    <property type="evidence" value="ECO:0007669"/>
    <property type="project" value="InterPro"/>
</dbReference>
<dbReference type="GO" id="GO:0140662">
    <property type="term" value="F:ATP-dependent protein folding chaperone"/>
    <property type="evidence" value="ECO:0007669"/>
    <property type="project" value="InterPro"/>
</dbReference>
<dbReference type="GO" id="GO:0046983">
    <property type="term" value="F:protein dimerization activity"/>
    <property type="evidence" value="ECO:0007669"/>
    <property type="project" value="InterPro"/>
</dbReference>
<dbReference type="GO" id="GO:0051082">
    <property type="term" value="F:unfolded protein binding"/>
    <property type="evidence" value="ECO:0007669"/>
    <property type="project" value="UniProtKB-UniRule"/>
</dbReference>
<dbReference type="GO" id="GO:0008270">
    <property type="term" value="F:zinc ion binding"/>
    <property type="evidence" value="ECO:0007669"/>
    <property type="project" value="InterPro"/>
</dbReference>
<dbReference type="GO" id="GO:0051301">
    <property type="term" value="P:cell division"/>
    <property type="evidence" value="ECO:0007669"/>
    <property type="project" value="TreeGrafter"/>
</dbReference>
<dbReference type="GO" id="GO:0051603">
    <property type="term" value="P:proteolysis involved in protein catabolic process"/>
    <property type="evidence" value="ECO:0007669"/>
    <property type="project" value="TreeGrafter"/>
</dbReference>
<dbReference type="CDD" id="cd19497">
    <property type="entry name" value="RecA-like_ClpX"/>
    <property type="match status" value="1"/>
</dbReference>
<dbReference type="FunFam" id="1.10.8.60:FF:000002">
    <property type="entry name" value="ATP-dependent Clp protease ATP-binding subunit ClpX"/>
    <property type="match status" value="1"/>
</dbReference>
<dbReference type="FunFam" id="3.40.50.300:FF:000005">
    <property type="entry name" value="ATP-dependent Clp protease ATP-binding subunit ClpX"/>
    <property type="match status" value="1"/>
</dbReference>
<dbReference type="Gene3D" id="1.10.8.60">
    <property type="match status" value="1"/>
</dbReference>
<dbReference type="Gene3D" id="6.20.220.10">
    <property type="entry name" value="ClpX chaperone, C4-type zinc finger domain"/>
    <property type="match status" value="1"/>
</dbReference>
<dbReference type="Gene3D" id="3.40.50.300">
    <property type="entry name" value="P-loop containing nucleotide triphosphate hydrolases"/>
    <property type="match status" value="1"/>
</dbReference>
<dbReference type="HAMAP" id="MF_00175">
    <property type="entry name" value="ClpX"/>
    <property type="match status" value="1"/>
</dbReference>
<dbReference type="InterPro" id="IPR003593">
    <property type="entry name" value="AAA+_ATPase"/>
</dbReference>
<dbReference type="InterPro" id="IPR050052">
    <property type="entry name" value="ATP-dep_Clp_protease_ClpX"/>
</dbReference>
<dbReference type="InterPro" id="IPR003959">
    <property type="entry name" value="ATPase_AAA_core"/>
</dbReference>
<dbReference type="InterPro" id="IPR019489">
    <property type="entry name" value="Clp_ATPase_C"/>
</dbReference>
<dbReference type="InterPro" id="IPR004487">
    <property type="entry name" value="Clp_protease_ATP-bd_su_ClpX"/>
</dbReference>
<dbReference type="InterPro" id="IPR046425">
    <property type="entry name" value="ClpX_bact"/>
</dbReference>
<dbReference type="InterPro" id="IPR027417">
    <property type="entry name" value="P-loop_NTPase"/>
</dbReference>
<dbReference type="InterPro" id="IPR010603">
    <property type="entry name" value="Znf_CppX_C4"/>
</dbReference>
<dbReference type="InterPro" id="IPR038366">
    <property type="entry name" value="Znf_CppX_C4_sf"/>
</dbReference>
<dbReference type="NCBIfam" id="TIGR00382">
    <property type="entry name" value="clpX"/>
    <property type="match status" value="1"/>
</dbReference>
<dbReference type="NCBIfam" id="NF003745">
    <property type="entry name" value="PRK05342.1"/>
    <property type="match status" value="1"/>
</dbReference>
<dbReference type="PANTHER" id="PTHR48102:SF7">
    <property type="entry name" value="ATP-DEPENDENT CLP PROTEASE ATP-BINDING SUBUNIT CLPX-LIKE, MITOCHONDRIAL"/>
    <property type="match status" value="1"/>
</dbReference>
<dbReference type="PANTHER" id="PTHR48102">
    <property type="entry name" value="ATP-DEPENDENT CLP PROTEASE ATP-BINDING SUBUNIT CLPX-LIKE, MITOCHONDRIAL-RELATED"/>
    <property type="match status" value="1"/>
</dbReference>
<dbReference type="Pfam" id="PF07724">
    <property type="entry name" value="AAA_2"/>
    <property type="match status" value="1"/>
</dbReference>
<dbReference type="Pfam" id="PF10431">
    <property type="entry name" value="ClpB_D2-small"/>
    <property type="match status" value="1"/>
</dbReference>
<dbReference type="Pfam" id="PF06689">
    <property type="entry name" value="zf-C4_ClpX"/>
    <property type="match status" value="1"/>
</dbReference>
<dbReference type="SMART" id="SM00382">
    <property type="entry name" value="AAA"/>
    <property type="match status" value="1"/>
</dbReference>
<dbReference type="SMART" id="SM01086">
    <property type="entry name" value="ClpB_D2-small"/>
    <property type="match status" value="1"/>
</dbReference>
<dbReference type="SMART" id="SM00994">
    <property type="entry name" value="zf-C4_ClpX"/>
    <property type="match status" value="1"/>
</dbReference>
<dbReference type="SUPFAM" id="SSF57716">
    <property type="entry name" value="Glucocorticoid receptor-like (DNA-binding domain)"/>
    <property type="match status" value="1"/>
</dbReference>
<dbReference type="SUPFAM" id="SSF52540">
    <property type="entry name" value="P-loop containing nucleoside triphosphate hydrolases"/>
    <property type="match status" value="1"/>
</dbReference>
<dbReference type="PROSITE" id="PS51902">
    <property type="entry name" value="CLPX_ZB"/>
    <property type="match status" value="1"/>
</dbReference>